<dbReference type="EC" id="2.8.1.-" evidence="1"/>
<dbReference type="EMBL" id="CP000269">
    <property type="protein sequence ID" value="ABR89873.1"/>
    <property type="molecule type" value="Genomic_DNA"/>
</dbReference>
<dbReference type="SMR" id="A6T3N1"/>
<dbReference type="STRING" id="375286.mma_3438"/>
<dbReference type="KEGG" id="mms:mma_3438"/>
<dbReference type="eggNOG" id="COG0037">
    <property type="taxonomic scope" value="Bacteria"/>
</dbReference>
<dbReference type="HOGENOM" id="CLU_026481_0_0_4"/>
<dbReference type="OrthoDB" id="9801054at2"/>
<dbReference type="Proteomes" id="UP000006388">
    <property type="component" value="Chromosome"/>
</dbReference>
<dbReference type="GO" id="GO:0005737">
    <property type="term" value="C:cytoplasm"/>
    <property type="evidence" value="ECO:0007669"/>
    <property type="project" value="UniProtKB-SubCell"/>
</dbReference>
<dbReference type="GO" id="GO:0051539">
    <property type="term" value="F:4 iron, 4 sulfur cluster binding"/>
    <property type="evidence" value="ECO:0007669"/>
    <property type="project" value="UniProtKB-UniRule"/>
</dbReference>
<dbReference type="GO" id="GO:0005524">
    <property type="term" value="F:ATP binding"/>
    <property type="evidence" value="ECO:0007669"/>
    <property type="project" value="UniProtKB-UniRule"/>
</dbReference>
<dbReference type="GO" id="GO:0000287">
    <property type="term" value="F:magnesium ion binding"/>
    <property type="evidence" value="ECO:0007669"/>
    <property type="project" value="UniProtKB-UniRule"/>
</dbReference>
<dbReference type="GO" id="GO:0016783">
    <property type="term" value="F:sulfurtransferase activity"/>
    <property type="evidence" value="ECO:0007669"/>
    <property type="project" value="UniProtKB-UniRule"/>
</dbReference>
<dbReference type="GO" id="GO:0000049">
    <property type="term" value="F:tRNA binding"/>
    <property type="evidence" value="ECO:0007669"/>
    <property type="project" value="UniProtKB-KW"/>
</dbReference>
<dbReference type="GO" id="GO:0034227">
    <property type="term" value="P:tRNA thio-modification"/>
    <property type="evidence" value="ECO:0007669"/>
    <property type="project" value="UniProtKB-UniRule"/>
</dbReference>
<dbReference type="CDD" id="cd24138">
    <property type="entry name" value="TtcA-like"/>
    <property type="match status" value="1"/>
</dbReference>
<dbReference type="Gene3D" id="3.40.50.620">
    <property type="entry name" value="HUPs"/>
    <property type="match status" value="1"/>
</dbReference>
<dbReference type="HAMAP" id="MF_01850">
    <property type="entry name" value="TtcA"/>
    <property type="match status" value="1"/>
</dbReference>
<dbReference type="InterPro" id="IPR014729">
    <property type="entry name" value="Rossmann-like_a/b/a_fold"/>
</dbReference>
<dbReference type="InterPro" id="IPR011063">
    <property type="entry name" value="TilS/TtcA_N"/>
</dbReference>
<dbReference type="InterPro" id="IPR012089">
    <property type="entry name" value="tRNA_Cyd_32_2_STrfase"/>
</dbReference>
<dbReference type="InterPro" id="IPR035107">
    <property type="entry name" value="tRNA_thiolation_TtcA_Ctu1"/>
</dbReference>
<dbReference type="NCBIfam" id="NF007972">
    <property type="entry name" value="PRK10696.1"/>
    <property type="match status" value="1"/>
</dbReference>
<dbReference type="PANTHER" id="PTHR43686:SF1">
    <property type="entry name" value="AMINOTRAN_5 DOMAIN-CONTAINING PROTEIN"/>
    <property type="match status" value="1"/>
</dbReference>
<dbReference type="PANTHER" id="PTHR43686">
    <property type="entry name" value="SULFURTRANSFERASE-RELATED"/>
    <property type="match status" value="1"/>
</dbReference>
<dbReference type="Pfam" id="PF01171">
    <property type="entry name" value="ATP_bind_3"/>
    <property type="match status" value="1"/>
</dbReference>
<dbReference type="PIRSF" id="PIRSF004976">
    <property type="entry name" value="ATPase_YdaO"/>
    <property type="match status" value="1"/>
</dbReference>
<dbReference type="SUPFAM" id="SSF52402">
    <property type="entry name" value="Adenine nucleotide alpha hydrolases-like"/>
    <property type="match status" value="1"/>
</dbReference>
<comment type="function">
    <text evidence="1">Catalyzes the ATP-dependent 2-thiolation of cytidine in position 32 of tRNA, to form 2-thiocytidine (s(2)C32). The sulfur atoms are provided by the cysteine/cysteine desulfurase (IscS) system.</text>
</comment>
<comment type="catalytic activity">
    <reaction evidence="1">
        <text>cytidine(32) in tRNA + S-sulfanyl-L-cysteinyl-[cysteine desulfurase] + AH2 + ATP = 2-thiocytidine(32) in tRNA + L-cysteinyl-[cysteine desulfurase] + A + AMP + diphosphate + H(+)</text>
        <dbReference type="Rhea" id="RHEA:57048"/>
        <dbReference type="Rhea" id="RHEA-COMP:10288"/>
        <dbReference type="Rhea" id="RHEA-COMP:12157"/>
        <dbReference type="Rhea" id="RHEA-COMP:12158"/>
        <dbReference type="Rhea" id="RHEA-COMP:14821"/>
        <dbReference type="ChEBI" id="CHEBI:13193"/>
        <dbReference type="ChEBI" id="CHEBI:15378"/>
        <dbReference type="ChEBI" id="CHEBI:17499"/>
        <dbReference type="ChEBI" id="CHEBI:29950"/>
        <dbReference type="ChEBI" id="CHEBI:30616"/>
        <dbReference type="ChEBI" id="CHEBI:33019"/>
        <dbReference type="ChEBI" id="CHEBI:61963"/>
        <dbReference type="ChEBI" id="CHEBI:82748"/>
        <dbReference type="ChEBI" id="CHEBI:141453"/>
        <dbReference type="ChEBI" id="CHEBI:456215"/>
    </reaction>
    <physiologicalReaction direction="left-to-right" evidence="1">
        <dbReference type="Rhea" id="RHEA:57049"/>
    </physiologicalReaction>
</comment>
<comment type="cofactor">
    <cofactor evidence="1">
        <name>Mg(2+)</name>
        <dbReference type="ChEBI" id="CHEBI:18420"/>
    </cofactor>
</comment>
<comment type="cofactor">
    <cofactor evidence="1">
        <name>[4Fe-4S] cluster</name>
        <dbReference type="ChEBI" id="CHEBI:49883"/>
    </cofactor>
    <text evidence="1">Binds 1 [4Fe-4S] cluster per subunit. The cluster is chelated by three Cys residues, the fourth Fe has a free coordination site that may bind a sulfur atom transferred from the persulfide of IscS.</text>
</comment>
<comment type="pathway">
    <text evidence="1">tRNA modification.</text>
</comment>
<comment type="subunit">
    <text evidence="1">Homodimer.</text>
</comment>
<comment type="subcellular location">
    <subcellularLocation>
        <location evidence="1">Cytoplasm</location>
    </subcellularLocation>
</comment>
<comment type="miscellaneous">
    <text evidence="1">The thiolation reaction likely consists of two steps: a first activation step by ATP to form an adenylated intermediate of the target base of tRNA, and a second nucleophilic substitution step of the sulfur (S) atom supplied by the hydrosulfide attached to the Fe-S cluster.</text>
</comment>
<comment type="similarity">
    <text evidence="1">Belongs to the TtcA family.</text>
</comment>
<sequence length="317" mass="35529">MSQALMNTAAATAETDAAMSFKQNEKIVYENNKLHKRLCRQVGQAIGDFNMIEDGDKVMVCLSGGKDSYALLDILMTLRERAPIKFDIVAVNLDQKQPNFPDHILPAYLKQLDIPFHIENQDTYSIVKRLIPEGKTTCSLCSRLRRGILYRVADELGANKIALGHHRDDIMETFFLNMFFGAKIKGMPPKLQSDDGKHIVIRPLAYVKEADTERYAEVKNFPIIPCDLCGSQENLQRKQIKGMLREWEKKFPGRVDNIFSSLSTVVPSHLMDKELFGFADLKATGEAMANGDIAFDEEPCSTGSTSIPGIIPLRADD</sequence>
<organism>
    <name type="scientific">Janthinobacterium sp. (strain Marseille)</name>
    <name type="common">Minibacterium massiliensis</name>
    <dbReference type="NCBI Taxonomy" id="375286"/>
    <lineage>
        <taxon>Bacteria</taxon>
        <taxon>Pseudomonadati</taxon>
        <taxon>Pseudomonadota</taxon>
        <taxon>Betaproteobacteria</taxon>
        <taxon>Burkholderiales</taxon>
        <taxon>Oxalobacteraceae</taxon>
        <taxon>Janthinobacterium</taxon>
    </lineage>
</organism>
<feature type="chain" id="PRO_0000348756" description="tRNA-cytidine(32) 2-sulfurtransferase">
    <location>
        <begin position="1"/>
        <end position="317"/>
    </location>
</feature>
<feature type="short sequence motif" description="PP-loop motif" evidence="1">
    <location>
        <begin position="63"/>
        <end position="68"/>
    </location>
</feature>
<feature type="binding site" evidence="1">
    <location>
        <position position="138"/>
    </location>
    <ligand>
        <name>[4Fe-4S] cluster</name>
        <dbReference type="ChEBI" id="CHEBI:49883"/>
    </ligand>
</feature>
<feature type="binding site" evidence="1">
    <location>
        <position position="141"/>
    </location>
    <ligand>
        <name>[4Fe-4S] cluster</name>
        <dbReference type="ChEBI" id="CHEBI:49883"/>
    </ligand>
</feature>
<feature type="binding site" evidence="1">
    <location>
        <position position="229"/>
    </location>
    <ligand>
        <name>[4Fe-4S] cluster</name>
        <dbReference type="ChEBI" id="CHEBI:49883"/>
    </ligand>
</feature>
<accession>A6T3N1</accession>
<reference key="1">
    <citation type="journal article" date="2007" name="PLoS Genet.">
        <title>Genome analysis of Minibacterium massiliensis highlights the convergent evolution of water-living bacteria.</title>
        <authorList>
            <person name="Audic S."/>
            <person name="Robert C."/>
            <person name="Campagna B."/>
            <person name="Parinello H."/>
            <person name="Claverie J.-M."/>
            <person name="Raoult D."/>
            <person name="Drancourt M."/>
        </authorList>
    </citation>
    <scope>NUCLEOTIDE SEQUENCE [LARGE SCALE GENOMIC DNA]</scope>
    <source>
        <strain>Marseille</strain>
    </source>
</reference>
<protein>
    <recommendedName>
        <fullName evidence="1">tRNA-cytidine(32) 2-sulfurtransferase</fullName>
        <ecNumber evidence="1">2.8.1.-</ecNumber>
    </recommendedName>
    <alternativeName>
        <fullName evidence="1">Two-thiocytidine biosynthesis protein A</fullName>
    </alternativeName>
    <alternativeName>
        <fullName evidence="1">tRNA 2-thiocytidine biosynthesis protein TtcA</fullName>
    </alternativeName>
</protein>
<gene>
    <name evidence="1" type="primary">ttcA</name>
    <name type="ordered locus">mma_3438</name>
</gene>
<proteinExistence type="inferred from homology"/>
<name>TTCA_JANMA</name>
<evidence type="ECO:0000255" key="1">
    <source>
        <dbReference type="HAMAP-Rule" id="MF_01850"/>
    </source>
</evidence>
<keyword id="KW-0004">4Fe-4S</keyword>
<keyword id="KW-0067">ATP-binding</keyword>
<keyword id="KW-0963">Cytoplasm</keyword>
<keyword id="KW-0408">Iron</keyword>
<keyword id="KW-0411">Iron-sulfur</keyword>
<keyword id="KW-0460">Magnesium</keyword>
<keyword id="KW-0479">Metal-binding</keyword>
<keyword id="KW-0547">Nucleotide-binding</keyword>
<keyword id="KW-0694">RNA-binding</keyword>
<keyword id="KW-0808">Transferase</keyword>
<keyword id="KW-0819">tRNA processing</keyword>
<keyword id="KW-0820">tRNA-binding</keyword>